<proteinExistence type="inferred from homology"/>
<dbReference type="EC" id="3.4.21.92" evidence="1"/>
<dbReference type="EMBL" id="CP000431">
    <property type="protein sequence ID" value="ABG93340.1"/>
    <property type="molecule type" value="Genomic_DNA"/>
</dbReference>
<dbReference type="RefSeq" id="WP_005264590.1">
    <property type="nucleotide sequence ID" value="NC_008268.1"/>
</dbReference>
<dbReference type="SMR" id="Q0SGJ6"/>
<dbReference type="MEROPS" id="S14.009"/>
<dbReference type="KEGG" id="rha:RHA1_ro01526"/>
<dbReference type="eggNOG" id="COG0740">
    <property type="taxonomic scope" value="Bacteria"/>
</dbReference>
<dbReference type="HOGENOM" id="CLU_058707_3_2_11"/>
<dbReference type="OrthoDB" id="9802800at2"/>
<dbReference type="Proteomes" id="UP000008710">
    <property type="component" value="Chromosome"/>
</dbReference>
<dbReference type="GO" id="GO:0005737">
    <property type="term" value="C:cytoplasm"/>
    <property type="evidence" value="ECO:0007669"/>
    <property type="project" value="UniProtKB-SubCell"/>
</dbReference>
<dbReference type="GO" id="GO:0009368">
    <property type="term" value="C:endopeptidase Clp complex"/>
    <property type="evidence" value="ECO:0007669"/>
    <property type="project" value="TreeGrafter"/>
</dbReference>
<dbReference type="GO" id="GO:0004176">
    <property type="term" value="F:ATP-dependent peptidase activity"/>
    <property type="evidence" value="ECO:0007669"/>
    <property type="project" value="InterPro"/>
</dbReference>
<dbReference type="GO" id="GO:0051117">
    <property type="term" value="F:ATPase binding"/>
    <property type="evidence" value="ECO:0007669"/>
    <property type="project" value="TreeGrafter"/>
</dbReference>
<dbReference type="GO" id="GO:0004252">
    <property type="term" value="F:serine-type endopeptidase activity"/>
    <property type="evidence" value="ECO:0007669"/>
    <property type="project" value="UniProtKB-UniRule"/>
</dbReference>
<dbReference type="GO" id="GO:0006515">
    <property type="term" value="P:protein quality control for misfolded or incompletely synthesized proteins"/>
    <property type="evidence" value="ECO:0007669"/>
    <property type="project" value="TreeGrafter"/>
</dbReference>
<dbReference type="CDD" id="cd07017">
    <property type="entry name" value="S14_ClpP_2"/>
    <property type="match status" value="1"/>
</dbReference>
<dbReference type="FunFam" id="3.90.226.10:FF:000002">
    <property type="entry name" value="ATP-dependent Clp protease proteolytic subunit"/>
    <property type="match status" value="1"/>
</dbReference>
<dbReference type="Gene3D" id="3.90.226.10">
    <property type="entry name" value="2-enoyl-CoA Hydratase, Chain A, domain 1"/>
    <property type="match status" value="1"/>
</dbReference>
<dbReference type="HAMAP" id="MF_00444">
    <property type="entry name" value="ClpP"/>
    <property type="match status" value="1"/>
</dbReference>
<dbReference type="InterPro" id="IPR001907">
    <property type="entry name" value="ClpP"/>
</dbReference>
<dbReference type="InterPro" id="IPR029045">
    <property type="entry name" value="ClpP/crotonase-like_dom_sf"/>
</dbReference>
<dbReference type="InterPro" id="IPR023562">
    <property type="entry name" value="ClpP/TepA"/>
</dbReference>
<dbReference type="InterPro" id="IPR033135">
    <property type="entry name" value="ClpP_His_AS"/>
</dbReference>
<dbReference type="InterPro" id="IPR018215">
    <property type="entry name" value="ClpP_Ser_AS"/>
</dbReference>
<dbReference type="NCBIfam" id="NF001368">
    <property type="entry name" value="PRK00277.1"/>
    <property type="match status" value="1"/>
</dbReference>
<dbReference type="NCBIfam" id="NF009205">
    <property type="entry name" value="PRK12553.1"/>
    <property type="match status" value="1"/>
</dbReference>
<dbReference type="PANTHER" id="PTHR10381">
    <property type="entry name" value="ATP-DEPENDENT CLP PROTEASE PROTEOLYTIC SUBUNIT"/>
    <property type="match status" value="1"/>
</dbReference>
<dbReference type="PANTHER" id="PTHR10381:SF26">
    <property type="entry name" value="ATP-DEPENDENT CLP PROTEASE PROTEOLYTIC SUBUNIT-LIKE-RELATED"/>
    <property type="match status" value="1"/>
</dbReference>
<dbReference type="Pfam" id="PF00574">
    <property type="entry name" value="CLP_protease"/>
    <property type="match status" value="1"/>
</dbReference>
<dbReference type="PRINTS" id="PR00127">
    <property type="entry name" value="CLPPROTEASEP"/>
</dbReference>
<dbReference type="SUPFAM" id="SSF52096">
    <property type="entry name" value="ClpP/crotonase"/>
    <property type="match status" value="1"/>
</dbReference>
<dbReference type="PROSITE" id="PS00382">
    <property type="entry name" value="CLP_PROTEASE_HIS"/>
    <property type="match status" value="1"/>
</dbReference>
<dbReference type="PROSITE" id="PS00381">
    <property type="entry name" value="CLP_PROTEASE_SER"/>
    <property type="match status" value="1"/>
</dbReference>
<keyword id="KW-0963">Cytoplasm</keyword>
<keyword id="KW-0378">Hydrolase</keyword>
<keyword id="KW-0645">Protease</keyword>
<keyword id="KW-0720">Serine protease</keyword>
<reference key="1">
    <citation type="journal article" date="2006" name="Proc. Natl. Acad. Sci. U.S.A.">
        <title>The complete genome of Rhodococcus sp. RHA1 provides insights into a catabolic powerhouse.</title>
        <authorList>
            <person name="McLeod M.P."/>
            <person name="Warren R.L."/>
            <person name="Hsiao W.W.L."/>
            <person name="Araki N."/>
            <person name="Myhre M."/>
            <person name="Fernandes C."/>
            <person name="Miyazawa D."/>
            <person name="Wong W."/>
            <person name="Lillquist A.L."/>
            <person name="Wang D."/>
            <person name="Dosanjh M."/>
            <person name="Hara H."/>
            <person name="Petrescu A."/>
            <person name="Morin R.D."/>
            <person name="Yang G."/>
            <person name="Stott J.M."/>
            <person name="Schein J.E."/>
            <person name="Shin H."/>
            <person name="Smailus D."/>
            <person name="Siddiqui A.S."/>
            <person name="Marra M.A."/>
            <person name="Jones S.J.M."/>
            <person name="Holt R."/>
            <person name="Brinkman F.S.L."/>
            <person name="Miyauchi K."/>
            <person name="Fukuda M."/>
            <person name="Davies J.E."/>
            <person name="Mohn W.W."/>
            <person name="Eltis L.D."/>
        </authorList>
    </citation>
    <scope>NUCLEOTIDE SEQUENCE [LARGE SCALE GENOMIC DNA]</scope>
    <source>
        <strain>RHA1</strain>
    </source>
</reference>
<sequence length="194" mass="21139">MSQYTIPHVIERTPAGERSFDIFSRLLNERIVFLGTEIDDGVANVVMAQLLHLQADSSDQEIGLYINSPGGSTTAMLAIYDTMQFLRPTIATYCMGQAASAAAVLLAAGTKGHRHVLAHSRTLLHQPSTQGNGTISDLALQAAEIMRVRSQTEAILSKHTGQTVERLRRDTDRDRIFTAEEAIEYGLADTLVAA</sequence>
<evidence type="ECO:0000255" key="1">
    <source>
        <dbReference type="HAMAP-Rule" id="MF_00444"/>
    </source>
</evidence>
<accession>Q0SGJ6</accession>
<gene>
    <name evidence="1" type="primary">clpP4</name>
    <name type="ordered locus">RHA1_ro01526</name>
</gene>
<comment type="function">
    <text evidence="1">Cleaves peptides in various proteins in a process that requires ATP hydrolysis. Has a chymotrypsin-like activity. Plays a major role in the degradation of misfolded proteins.</text>
</comment>
<comment type="catalytic activity">
    <reaction evidence="1">
        <text>Hydrolysis of proteins to small peptides in the presence of ATP and magnesium. alpha-casein is the usual test substrate. In the absence of ATP, only oligopeptides shorter than five residues are hydrolyzed (such as succinyl-Leu-Tyr-|-NHMec, and Leu-Tyr-Leu-|-Tyr-Trp, in which cleavage of the -Tyr-|-Leu- and -Tyr-|-Trp bonds also occurs).</text>
        <dbReference type="EC" id="3.4.21.92"/>
    </reaction>
</comment>
<comment type="subunit">
    <text evidence="1">Fourteen ClpP subunits assemble into 2 heptameric rings which stack back to back to give a disk-like structure with a central cavity, resembling the structure of eukaryotic proteasomes.</text>
</comment>
<comment type="subcellular location">
    <subcellularLocation>
        <location evidence="1">Cytoplasm</location>
    </subcellularLocation>
</comment>
<comment type="similarity">
    <text evidence="1">Belongs to the peptidase S14 family.</text>
</comment>
<feature type="chain" id="PRO_0000252841" description="ATP-dependent Clp protease proteolytic subunit 4">
    <location>
        <begin position="1"/>
        <end position="194"/>
    </location>
</feature>
<feature type="active site" description="Nucleophile" evidence="1">
    <location>
        <position position="100"/>
    </location>
</feature>
<feature type="active site" evidence="1">
    <location>
        <position position="125"/>
    </location>
</feature>
<protein>
    <recommendedName>
        <fullName evidence="1">ATP-dependent Clp protease proteolytic subunit 4</fullName>
        <ecNumber evidence="1">3.4.21.92</ecNumber>
    </recommendedName>
    <alternativeName>
        <fullName evidence="1">Endopeptidase Clp 4</fullName>
    </alternativeName>
</protein>
<organism>
    <name type="scientific">Rhodococcus jostii (strain RHA1)</name>
    <dbReference type="NCBI Taxonomy" id="101510"/>
    <lineage>
        <taxon>Bacteria</taxon>
        <taxon>Bacillati</taxon>
        <taxon>Actinomycetota</taxon>
        <taxon>Actinomycetes</taxon>
        <taxon>Mycobacteriales</taxon>
        <taxon>Nocardiaceae</taxon>
        <taxon>Rhodococcus</taxon>
    </lineage>
</organism>
<name>CLPP4_RHOJR</name>